<keyword id="KW-0028">Amino-acid biosynthesis</keyword>
<keyword id="KW-0057">Aromatic amino acid biosynthesis</keyword>
<keyword id="KW-0521">NADP</keyword>
<keyword id="KW-0560">Oxidoreductase</keyword>
<gene>
    <name evidence="1" type="primary">aroE</name>
    <name type="ordered locus">CPR_0693</name>
</gene>
<name>AROE_CLOPS</name>
<reference key="1">
    <citation type="journal article" date="2006" name="Genome Res.">
        <title>Skewed genomic variability in strains of the toxigenic bacterial pathogen, Clostridium perfringens.</title>
        <authorList>
            <person name="Myers G.S.A."/>
            <person name="Rasko D.A."/>
            <person name="Cheung J.K."/>
            <person name="Ravel J."/>
            <person name="Seshadri R."/>
            <person name="DeBoy R.T."/>
            <person name="Ren Q."/>
            <person name="Varga J."/>
            <person name="Awad M.M."/>
            <person name="Brinkac L.M."/>
            <person name="Daugherty S.C."/>
            <person name="Haft D.H."/>
            <person name="Dodson R.J."/>
            <person name="Madupu R."/>
            <person name="Nelson W.C."/>
            <person name="Rosovitz M.J."/>
            <person name="Sullivan S.A."/>
            <person name="Khouri H."/>
            <person name="Dimitrov G.I."/>
            <person name="Watkins K.L."/>
            <person name="Mulligan S."/>
            <person name="Benton J."/>
            <person name="Radune D."/>
            <person name="Fisher D.J."/>
            <person name="Atkins H.S."/>
            <person name="Hiscox T."/>
            <person name="Jost B.H."/>
            <person name="Billington S.J."/>
            <person name="Songer J.G."/>
            <person name="McClane B.A."/>
            <person name="Titball R.W."/>
            <person name="Rood J.I."/>
            <person name="Melville S.B."/>
            <person name="Paulsen I.T."/>
        </authorList>
    </citation>
    <scope>NUCLEOTIDE SEQUENCE [LARGE SCALE GENOMIC DNA]</scope>
    <source>
        <strain>SM101 / Type A</strain>
    </source>
</reference>
<organism>
    <name type="scientific">Clostridium perfringens (strain SM101 / Type A)</name>
    <dbReference type="NCBI Taxonomy" id="289380"/>
    <lineage>
        <taxon>Bacteria</taxon>
        <taxon>Bacillati</taxon>
        <taxon>Bacillota</taxon>
        <taxon>Clostridia</taxon>
        <taxon>Eubacteriales</taxon>
        <taxon>Clostridiaceae</taxon>
        <taxon>Clostridium</taxon>
    </lineage>
</organism>
<proteinExistence type="inferred from homology"/>
<comment type="function">
    <text evidence="1">Involved in the biosynthesis of the chorismate, which leads to the biosynthesis of aromatic amino acids. Catalyzes the reversible NADPH linked reduction of 3-dehydroshikimate (DHSA) to yield shikimate (SA).</text>
</comment>
<comment type="catalytic activity">
    <reaction evidence="1">
        <text>shikimate + NADP(+) = 3-dehydroshikimate + NADPH + H(+)</text>
        <dbReference type="Rhea" id="RHEA:17737"/>
        <dbReference type="ChEBI" id="CHEBI:15378"/>
        <dbReference type="ChEBI" id="CHEBI:16630"/>
        <dbReference type="ChEBI" id="CHEBI:36208"/>
        <dbReference type="ChEBI" id="CHEBI:57783"/>
        <dbReference type="ChEBI" id="CHEBI:58349"/>
        <dbReference type="EC" id="1.1.1.25"/>
    </reaction>
</comment>
<comment type="pathway">
    <text evidence="1">Metabolic intermediate biosynthesis; chorismate biosynthesis; chorismate from D-erythrose 4-phosphate and phosphoenolpyruvate: step 4/7.</text>
</comment>
<comment type="subunit">
    <text evidence="1">Homodimer.</text>
</comment>
<comment type="similarity">
    <text evidence="1">Belongs to the shikimate dehydrogenase family.</text>
</comment>
<dbReference type="EC" id="1.1.1.25" evidence="1"/>
<dbReference type="EMBL" id="CP000312">
    <property type="protein sequence ID" value="ABG85376.1"/>
    <property type="molecule type" value="Genomic_DNA"/>
</dbReference>
<dbReference type="RefSeq" id="WP_011591770.1">
    <property type="nucleotide sequence ID" value="NC_008262.1"/>
</dbReference>
<dbReference type="SMR" id="Q0SV31"/>
<dbReference type="KEGG" id="cpr:CPR_0693"/>
<dbReference type="UniPathway" id="UPA00053">
    <property type="reaction ID" value="UER00087"/>
</dbReference>
<dbReference type="Proteomes" id="UP000001824">
    <property type="component" value="Chromosome"/>
</dbReference>
<dbReference type="GO" id="GO:0005829">
    <property type="term" value="C:cytosol"/>
    <property type="evidence" value="ECO:0007669"/>
    <property type="project" value="TreeGrafter"/>
</dbReference>
<dbReference type="GO" id="GO:0050661">
    <property type="term" value="F:NADP binding"/>
    <property type="evidence" value="ECO:0007669"/>
    <property type="project" value="InterPro"/>
</dbReference>
<dbReference type="GO" id="GO:0004764">
    <property type="term" value="F:shikimate 3-dehydrogenase (NADP+) activity"/>
    <property type="evidence" value="ECO:0007669"/>
    <property type="project" value="UniProtKB-UniRule"/>
</dbReference>
<dbReference type="GO" id="GO:0008652">
    <property type="term" value="P:amino acid biosynthetic process"/>
    <property type="evidence" value="ECO:0007669"/>
    <property type="project" value="UniProtKB-KW"/>
</dbReference>
<dbReference type="GO" id="GO:0009073">
    <property type="term" value="P:aromatic amino acid family biosynthetic process"/>
    <property type="evidence" value="ECO:0007669"/>
    <property type="project" value="UniProtKB-KW"/>
</dbReference>
<dbReference type="GO" id="GO:0009423">
    <property type="term" value="P:chorismate biosynthetic process"/>
    <property type="evidence" value="ECO:0007669"/>
    <property type="project" value="UniProtKB-UniRule"/>
</dbReference>
<dbReference type="GO" id="GO:0019632">
    <property type="term" value="P:shikimate metabolic process"/>
    <property type="evidence" value="ECO:0007669"/>
    <property type="project" value="InterPro"/>
</dbReference>
<dbReference type="CDD" id="cd01065">
    <property type="entry name" value="NAD_bind_Shikimate_DH"/>
    <property type="match status" value="1"/>
</dbReference>
<dbReference type="Gene3D" id="3.40.50.10860">
    <property type="entry name" value="Leucine Dehydrogenase, chain A, domain 1"/>
    <property type="match status" value="1"/>
</dbReference>
<dbReference type="Gene3D" id="3.40.50.720">
    <property type="entry name" value="NAD(P)-binding Rossmann-like Domain"/>
    <property type="match status" value="1"/>
</dbReference>
<dbReference type="HAMAP" id="MF_00222">
    <property type="entry name" value="Shikimate_DH_AroE"/>
    <property type="match status" value="1"/>
</dbReference>
<dbReference type="InterPro" id="IPR046346">
    <property type="entry name" value="Aminoacid_DH-like_N_sf"/>
</dbReference>
<dbReference type="InterPro" id="IPR036291">
    <property type="entry name" value="NAD(P)-bd_dom_sf"/>
</dbReference>
<dbReference type="InterPro" id="IPR011342">
    <property type="entry name" value="Shikimate_DH"/>
</dbReference>
<dbReference type="InterPro" id="IPR013708">
    <property type="entry name" value="Shikimate_DH-bd_N"/>
</dbReference>
<dbReference type="InterPro" id="IPR022893">
    <property type="entry name" value="Shikimate_DH_fam"/>
</dbReference>
<dbReference type="InterPro" id="IPR006151">
    <property type="entry name" value="Shikm_DH/Glu-tRNA_Rdtase"/>
</dbReference>
<dbReference type="NCBIfam" id="TIGR00507">
    <property type="entry name" value="aroE"/>
    <property type="match status" value="1"/>
</dbReference>
<dbReference type="PANTHER" id="PTHR21089:SF1">
    <property type="entry name" value="BIFUNCTIONAL 3-DEHYDROQUINATE DEHYDRATASE_SHIKIMATE DEHYDROGENASE, CHLOROPLASTIC"/>
    <property type="match status" value="1"/>
</dbReference>
<dbReference type="PANTHER" id="PTHR21089">
    <property type="entry name" value="SHIKIMATE DEHYDROGENASE"/>
    <property type="match status" value="1"/>
</dbReference>
<dbReference type="Pfam" id="PF01488">
    <property type="entry name" value="Shikimate_DH"/>
    <property type="match status" value="1"/>
</dbReference>
<dbReference type="Pfam" id="PF08501">
    <property type="entry name" value="Shikimate_dh_N"/>
    <property type="match status" value="1"/>
</dbReference>
<dbReference type="SUPFAM" id="SSF53223">
    <property type="entry name" value="Aminoacid dehydrogenase-like, N-terminal domain"/>
    <property type="match status" value="1"/>
</dbReference>
<dbReference type="SUPFAM" id="SSF51735">
    <property type="entry name" value="NAD(P)-binding Rossmann-fold domains"/>
    <property type="match status" value="1"/>
</dbReference>
<evidence type="ECO:0000255" key="1">
    <source>
        <dbReference type="HAMAP-Rule" id="MF_00222"/>
    </source>
</evidence>
<accession>Q0SV31</accession>
<feature type="chain" id="PRO_1000021278" description="Shikimate dehydrogenase (NADP(+))">
    <location>
        <begin position="1"/>
        <end position="271"/>
    </location>
</feature>
<feature type="active site" description="Proton acceptor" evidence="1">
    <location>
        <position position="65"/>
    </location>
</feature>
<feature type="binding site" evidence="1">
    <location>
        <begin position="14"/>
        <end position="16"/>
    </location>
    <ligand>
        <name>shikimate</name>
        <dbReference type="ChEBI" id="CHEBI:36208"/>
    </ligand>
</feature>
<feature type="binding site" evidence="1">
    <location>
        <position position="61"/>
    </location>
    <ligand>
        <name>shikimate</name>
        <dbReference type="ChEBI" id="CHEBI:36208"/>
    </ligand>
</feature>
<feature type="binding site" evidence="1">
    <location>
        <position position="86"/>
    </location>
    <ligand>
        <name>shikimate</name>
        <dbReference type="ChEBI" id="CHEBI:36208"/>
    </ligand>
</feature>
<feature type="binding site" evidence="1">
    <location>
        <position position="101"/>
    </location>
    <ligand>
        <name>shikimate</name>
        <dbReference type="ChEBI" id="CHEBI:36208"/>
    </ligand>
</feature>
<feature type="binding site" evidence="1">
    <location>
        <begin position="125"/>
        <end position="129"/>
    </location>
    <ligand>
        <name>NADP(+)</name>
        <dbReference type="ChEBI" id="CHEBI:58349"/>
    </ligand>
</feature>
<feature type="binding site" evidence="1">
    <location>
        <position position="212"/>
    </location>
    <ligand>
        <name>NADP(+)</name>
        <dbReference type="ChEBI" id="CHEBI:58349"/>
    </ligand>
</feature>
<feature type="binding site" evidence="1">
    <location>
        <position position="214"/>
    </location>
    <ligand>
        <name>shikimate</name>
        <dbReference type="ChEBI" id="CHEBI:36208"/>
    </ligand>
</feature>
<feature type="binding site" evidence="1">
    <location>
        <position position="235"/>
    </location>
    <ligand>
        <name>NADP(+)</name>
        <dbReference type="ChEBI" id="CHEBI:58349"/>
    </ligand>
</feature>
<protein>
    <recommendedName>
        <fullName evidence="1">Shikimate dehydrogenase (NADP(+))</fullName>
        <shortName evidence="1">SDH</shortName>
        <ecNumber evidence="1">1.1.1.25</ecNumber>
    </recommendedName>
</protein>
<sequence>MKLFGLIGEKLGHSLSPEIHNKVFKDNNIDGLYNLFSVKKDFENNIVESLKCLGVRGANVTIPYKEKVMNQLDIISHEAKAIGAVNTILIKDGKSYGYNTDYYGFGKMLERAKVDIEGNSFFVLGAGGAARSILKYLEDSKAKKIVLVSRDKEKVFKKFKDFNINFMSYGELEEIHEEFALINTTPCGMYPNTNSVAVSEKVIKKFKVALDIVYNPLETKFLKMAKDNGLKTVDGLFMLVGQGVKAEEIWNGIKVDKSTEENIYEELKCRF</sequence>